<protein>
    <recommendedName>
        <fullName evidence="3">ESAT-6-like protein EsxM</fullName>
    </recommendedName>
    <alternativeName>
        <fullName evidence="2">Type VII-secreted effector EsxM</fullName>
    </alternativeName>
</protein>
<proteinExistence type="evidence at protein level"/>
<dbReference type="EMBL" id="CP000854">
    <property type="protein sequence ID" value="ACC41117.1"/>
    <property type="molecule type" value="Genomic_DNA"/>
</dbReference>
<dbReference type="RefSeq" id="WP_012394389.1">
    <property type="nucleotide sequence ID" value="NC_010612.1"/>
</dbReference>
<dbReference type="SMR" id="B2HSU3"/>
<dbReference type="STRING" id="216594.MMAR_2674"/>
<dbReference type="KEGG" id="mmi:MMAR_2674"/>
<dbReference type="eggNOG" id="COG4842">
    <property type="taxonomic scope" value="Bacteria"/>
</dbReference>
<dbReference type="HOGENOM" id="CLU_171031_0_0_11"/>
<dbReference type="OrthoDB" id="4739539at2"/>
<dbReference type="Proteomes" id="UP000001190">
    <property type="component" value="Chromosome"/>
</dbReference>
<dbReference type="GO" id="GO:0005576">
    <property type="term" value="C:extracellular region"/>
    <property type="evidence" value="ECO:0007669"/>
    <property type="project" value="UniProtKB-SubCell"/>
</dbReference>
<dbReference type="Gene3D" id="1.10.287.1060">
    <property type="entry name" value="ESAT-6-like"/>
    <property type="match status" value="1"/>
</dbReference>
<dbReference type="InterPro" id="IPR036689">
    <property type="entry name" value="ESAT-6-like_sf"/>
</dbReference>
<dbReference type="InterPro" id="IPR010310">
    <property type="entry name" value="T7SS_ESAT-6-like"/>
</dbReference>
<dbReference type="NCBIfam" id="TIGR03930">
    <property type="entry name" value="WXG100_ESAT6"/>
    <property type="match status" value="1"/>
</dbReference>
<dbReference type="Pfam" id="PF06013">
    <property type="entry name" value="WXG100"/>
    <property type="match status" value="1"/>
</dbReference>
<dbReference type="SUPFAM" id="SSF140453">
    <property type="entry name" value="EsxAB dimer-like"/>
    <property type="match status" value="1"/>
</dbReference>
<name>ESXM_MYCMM</name>
<reference key="1">
    <citation type="journal article" date="2008" name="Genome Res.">
        <title>Insights from the complete genome sequence of Mycobacterium marinum on the evolution of Mycobacterium tuberculosis.</title>
        <authorList>
            <person name="Stinear T.P."/>
            <person name="Seemann T."/>
            <person name="Harrison P.F."/>
            <person name="Jenkin G.A."/>
            <person name="Davies J.K."/>
            <person name="Johnson P.D."/>
            <person name="Abdellah Z."/>
            <person name="Arrowsmith C."/>
            <person name="Chillingworth T."/>
            <person name="Churcher C."/>
            <person name="Clarke K."/>
            <person name="Cronin A."/>
            <person name="Davis P."/>
            <person name="Goodhead I."/>
            <person name="Holroyd N."/>
            <person name="Jagels K."/>
            <person name="Lord A."/>
            <person name="Moule S."/>
            <person name="Mungall K."/>
            <person name="Norbertczak H."/>
            <person name="Quail M.A."/>
            <person name="Rabbinowitsch E."/>
            <person name="Walker D."/>
            <person name="White B."/>
            <person name="Whitehead S."/>
            <person name="Small P.L."/>
            <person name="Brosch R."/>
            <person name="Ramakrishnan L."/>
            <person name="Fischbach M.A."/>
            <person name="Parkhill J."/>
            <person name="Cole S.T."/>
        </authorList>
    </citation>
    <scope>NUCLEOTIDE SEQUENCE [LARGE SCALE GENOMIC DNA]</scope>
    <source>
        <strain>ATCC BAA-535 / M</strain>
    </source>
</reference>
<reference key="2">
    <citation type="journal article" date="2022" name="Cell">
        <title>An ancestral mycobacterial effector promotes dissemination of infection.</title>
        <authorList>
            <person name="Saelens J.W."/>
            <person name="Sweeney M.I."/>
            <person name="Viswanathan G."/>
            <person name="Xet-Mull A.M."/>
            <person name="Jurcic Smith K.L."/>
            <person name="Sisk D.M."/>
            <person name="Hu D.D."/>
            <person name="Cronin R.M."/>
            <person name="Hughes E.J."/>
            <person name="Brewer W.J."/>
            <person name="Coers J."/>
            <person name="Champion M.M."/>
            <person name="Champion P.A."/>
            <person name="Lowe C.B."/>
            <person name="Smith C.M."/>
            <person name="Lee S."/>
            <person name="Stout J.E."/>
            <person name="Tobin D.M."/>
        </authorList>
    </citation>
    <scope>FUNCTION IN VIRULENCE</scope>
    <scope>EXPRESSION IN M.TUBERCULOSIS</scope>
    <scope>SUBCELLULAR LOCATION</scope>
    <scope>INDUCTION</scope>
    <scope>DISRUPTION PHENOTYPE</scope>
    <source>
        <strain>ATCC BAA-535 / M</strain>
    </source>
</reference>
<keyword id="KW-1185">Reference proteome</keyword>
<keyword id="KW-0964">Secreted</keyword>
<keyword id="KW-0843">Virulence</keyword>
<organism>
    <name type="scientific">Mycobacterium marinum (strain ATCC BAA-535 / M)</name>
    <dbReference type="NCBI Taxonomy" id="216594"/>
    <lineage>
        <taxon>Bacteria</taxon>
        <taxon>Bacillati</taxon>
        <taxon>Actinomycetota</taxon>
        <taxon>Actinomycetes</taxon>
        <taxon>Mycobacteriales</taxon>
        <taxon>Mycobacteriaceae</taxon>
        <taxon>Mycobacterium</taxon>
        <taxon>Mycobacterium ulcerans group</taxon>
    </lineage>
</organism>
<accession>B2HSU3</accession>
<evidence type="ECO:0000269" key="1">
    <source>
    </source>
</evidence>
<evidence type="ECO:0000303" key="2">
    <source>
    </source>
</evidence>
<evidence type="ECO:0000305" key="3"/>
<evidence type="ECO:0000305" key="4">
    <source>
    </source>
</evidence>
<evidence type="ECO:0000312" key="5">
    <source>
        <dbReference type="EMBL" id="ACC41117.1"/>
    </source>
</evidence>
<feature type="chain" id="PRO_0000457620" description="ESAT-6-like protein EsxM">
    <location>
        <begin position="1"/>
        <end position="98"/>
    </location>
</feature>
<gene>
    <name evidence="2" type="primary">esxM</name>
    <name evidence="5" type="ordered locus">MMAR_2674</name>
</gene>
<sequence length="98" mass="10953">MTARFMTDPHAMRDMAGRFEMHAQTVEDEARKMWASSQNIAGAGWSGMASATSLDTMGQMNTAFRNIVNMLHSVRDGLVRDANNYEQQEQASQQVLRG</sequence>
<comment type="function">
    <text evidence="1">Alters the host macrophage cytoskeleton and enhances macrophage motility (PubMed:36356582). Promotes granuloma efflux, extrapulmonary dissemination of infection and bone disease (PubMed:36356582).</text>
</comment>
<comment type="subcellular location">
    <subcellularLocation>
        <location evidence="1">Secreted</location>
    </subcellularLocation>
    <text evidence="4">Secreted via the ESX-5 / type VII secretion system (T7SS).</text>
</comment>
<comment type="induction">
    <text evidence="1">Expression is increased upon phosphate starvation and during infection.</text>
</comment>
<comment type="disruption phenotype">
    <text evidence="1">Disruption of the gene results in decreased dissemination independent of burden.</text>
</comment>
<comment type="miscellaneous">
    <text evidence="1">M.marinum contains the ancestral full-length version of EsxM rather than the truncated inactive version which is present in other modern Mtb lineages, including M.tuberculosis H37Rv (PubMed:36356582). Reconstitution of this ancestral version of EsxM in M.tuberculosis H37Rv alters the migratory mode of infected macrophages, enhancing their motility (PubMed:36356582).</text>
</comment>
<comment type="similarity">
    <text evidence="3">Belongs to the WXG100 family. CFP-10 subfamily.</text>
</comment>